<organism>
    <name type="scientific">Burkholderia mallei (strain NCTC 10247)</name>
    <dbReference type="NCBI Taxonomy" id="320389"/>
    <lineage>
        <taxon>Bacteria</taxon>
        <taxon>Pseudomonadati</taxon>
        <taxon>Pseudomonadota</taxon>
        <taxon>Betaproteobacteria</taxon>
        <taxon>Burkholderiales</taxon>
        <taxon>Burkholderiaceae</taxon>
        <taxon>Burkholderia</taxon>
        <taxon>pseudomallei group</taxon>
    </lineage>
</organism>
<dbReference type="EC" id="2.1.1.166" evidence="1"/>
<dbReference type="EMBL" id="CP000548">
    <property type="protein sequence ID" value="ABO06142.1"/>
    <property type="molecule type" value="Genomic_DNA"/>
</dbReference>
<dbReference type="RefSeq" id="WP_004193119.1">
    <property type="nucleotide sequence ID" value="NZ_CP007802.1"/>
</dbReference>
<dbReference type="SMR" id="A3MIQ3"/>
<dbReference type="KEGG" id="bmaz:BM44_2461"/>
<dbReference type="KEGG" id="bmn:BMA10247_0570"/>
<dbReference type="PATRIC" id="fig|320389.8.peg.2776"/>
<dbReference type="GO" id="GO:0005737">
    <property type="term" value="C:cytoplasm"/>
    <property type="evidence" value="ECO:0007669"/>
    <property type="project" value="UniProtKB-SubCell"/>
</dbReference>
<dbReference type="GO" id="GO:0008650">
    <property type="term" value="F:rRNA (uridine-2'-O-)-methyltransferase activity"/>
    <property type="evidence" value="ECO:0007669"/>
    <property type="project" value="UniProtKB-UniRule"/>
</dbReference>
<dbReference type="FunFam" id="3.40.50.150:FF:000005">
    <property type="entry name" value="Ribosomal RNA large subunit methyltransferase E"/>
    <property type="match status" value="1"/>
</dbReference>
<dbReference type="Gene3D" id="3.40.50.150">
    <property type="entry name" value="Vaccinia Virus protein VP39"/>
    <property type="match status" value="1"/>
</dbReference>
<dbReference type="HAMAP" id="MF_01547">
    <property type="entry name" value="RNA_methyltr_E"/>
    <property type="match status" value="1"/>
</dbReference>
<dbReference type="InterPro" id="IPR050082">
    <property type="entry name" value="RNA_methyltr_RlmE"/>
</dbReference>
<dbReference type="InterPro" id="IPR002877">
    <property type="entry name" value="RNA_MeTrfase_FtsJ_dom"/>
</dbReference>
<dbReference type="InterPro" id="IPR015507">
    <property type="entry name" value="rRNA-MeTfrase_E"/>
</dbReference>
<dbReference type="InterPro" id="IPR029063">
    <property type="entry name" value="SAM-dependent_MTases_sf"/>
</dbReference>
<dbReference type="PANTHER" id="PTHR10920">
    <property type="entry name" value="RIBOSOMAL RNA METHYLTRANSFERASE"/>
    <property type="match status" value="1"/>
</dbReference>
<dbReference type="PANTHER" id="PTHR10920:SF18">
    <property type="entry name" value="RRNA METHYLTRANSFERASE 2, MITOCHONDRIAL"/>
    <property type="match status" value="1"/>
</dbReference>
<dbReference type="Pfam" id="PF01728">
    <property type="entry name" value="FtsJ"/>
    <property type="match status" value="1"/>
</dbReference>
<dbReference type="PIRSF" id="PIRSF005461">
    <property type="entry name" value="23S_rRNA_mtase"/>
    <property type="match status" value="1"/>
</dbReference>
<dbReference type="SUPFAM" id="SSF53335">
    <property type="entry name" value="S-adenosyl-L-methionine-dependent methyltransferases"/>
    <property type="match status" value="1"/>
</dbReference>
<keyword id="KW-0963">Cytoplasm</keyword>
<keyword id="KW-0489">Methyltransferase</keyword>
<keyword id="KW-0698">rRNA processing</keyword>
<keyword id="KW-0949">S-adenosyl-L-methionine</keyword>
<keyword id="KW-0808">Transferase</keyword>
<protein>
    <recommendedName>
        <fullName evidence="1">Ribosomal RNA large subunit methyltransferase E</fullName>
        <ecNumber evidence="1">2.1.1.166</ecNumber>
    </recommendedName>
    <alternativeName>
        <fullName evidence="1">23S rRNA Um2552 methyltransferase</fullName>
    </alternativeName>
    <alternativeName>
        <fullName evidence="1">rRNA (uridine-2'-O-)-methyltransferase</fullName>
    </alternativeName>
</protein>
<evidence type="ECO:0000255" key="1">
    <source>
        <dbReference type="HAMAP-Rule" id="MF_01547"/>
    </source>
</evidence>
<evidence type="ECO:0000256" key="2">
    <source>
        <dbReference type="SAM" id="MobiDB-lite"/>
    </source>
</evidence>
<proteinExistence type="inferred from homology"/>
<name>RLME_BURM7</name>
<gene>
    <name evidence="1" type="primary">rlmE</name>
    <name evidence="1" type="synonym">ftsJ</name>
    <name evidence="1" type="synonym">rrmJ</name>
    <name type="ordered locus">BMA10247_0570</name>
</gene>
<sequence length="220" mass="24660">MAKNRFNQSWLHDHINDPYVKMAQREGYRARAAYKLKEIDEQDKLIRPGQVIVDLGAAPGSWSQYARNKLAQGKRRDAVREGGIDGTIIALDMLPMEPVADVHFIQGDFREESVLHQLEEVLAGRAVDLVISDMAPNLSGVAVADAARIEHVCDLALEFAQNHLKPDGALLVKCFHGSGYSQIVEKFKHQFKTVAPRKPKASRDKSSETFILGRHLKQPR</sequence>
<feature type="chain" id="PRO_1000087675" description="Ribosomal RNA large subunit methyltransferase E">
    <location>
        <begin position="1"/>
        <end position="220"/>
    </location>
</feature>
<feature type="region of interest" description="Disordered" evidence="2">
    <location>
        <begin position="195"/>
        <end position="220"/>
    </location>
</feature>
<feature type="active site" description="Proton acceptor" evidence="1">
    <location>
        <position position="173"/>
    </location>
</feature>
<feature type="binding site" evidence="1">
    <location>
        <position position="60"/>
    </location>
    <ligand>
        <name>S-adenosyl-L-methionine</name>
        <dbReference type="ChEBI" id="CHEBI:59789"/>
    </ligand>
</feature>
<feature type="binding site" evidence="1">
    <location>
        <position position="62"/>
    </location>
    <ligand>
        <name>S-adenosyl-L-methionine</name>
        <dbReference type="ChEBI" id="CHEBI:59789"/>
    </ligand>
</feature>
<feature type="binding site" evidence="1">
    <location>
        <position position="92"/>
    </location>
    <ligand>
        <name>S-adenosyl-L-methionine</name>
        <dbReference type="ChEBI" id="CHEBI:59789"/>
    </ligand>
</feature>
<feature type="binding site" evidence="1">
    <location>
        <position position="108"/>
    </location>
    <ligand>
        <name>S-adenosyl-L-methionine</name>
        <dbReference type="ChEBI" id="CHEBI:59789"/>
    </ligand>
</feature>
<feature type="binding site" evidence="1">
    <location>
        <position position="133"/>
    </location>
    <ligand>
        <name>S-adenosyl-L-methionine</name>
        <dbReference type="ChEBI" id="CHEBI:59789"/>
    </ligand>
</feature>
<accession>A3MIQ3</accession>
<comment type="function">
    <text evidence="1">Specifically methylates the uridine in position 2552 of 23S rRNA at the 2'-O position of the ribose in the fully assembled 50S ribosomal subunit.</text>
</comment>
<comment type="catalytic activity">
    <reaction evidence="1">
        <text>uridine(2552) in 23S rRNA + S-adenosyl-L-methionine = 2'-O-methyluridine(2552) in 23S rRNA + S-adenosyl-L-homocysteine + H(+)</text>
        <dbReference type="Rhea" id="RHEA:42720"/>
        <dbReference type="Rhea" id="RHEA-COMP:10202"/>
        <dbReference type="Rhea" id="RHEA-COMP:10203"/>
        <dbReference type="ChEBI" id="CHEBI:15378"/>
        <dbReference type="ChEBI" id="CHEBI:57856"/>
        <dbReference type="ChEBI" id="CHEBI:59789"/>
        <dbReference type="ChEBI" id="CHEBI:65315"/>
        <dbReference type="ChEBI" id="CHEBI:74478"/>
        <dbReference type="EC" id="2.1.1.166"/>
    </reaction>
</comment>
<comment type="subcellular location">
    <subcellularLocation>
        <location evidence="1">Cytoplasm</location>
    </subcellularLocation>
</comment>
<comment type="similarity">
    <text evidence="1">Belongs to the class I-like SAM-binding methyltransferase superfamily. RNA methyltransferase RlmE family.</text>
</comment>
<reference key="1">
    <citation type="journal article" date="2010" name="Genome Biol. Evol.">
        <title>Continuing evolution of Burkholderia mallei through genome reduction and large-scale rearrangements.</title>
        <authorList>
            <person name="Losada L."/>
            <person name="Ronning C.M."/>
            <person name="DeShazer D."/>
            <person name="Woods D."/>
            <person name="Fedorova N."/>
            <person name="Kim H.S."/>
            <person name="Shabalina S.A."/>
            <person name="Pearson T.R."/>
            <person name="Brinkac L."/>
            <person name="Tan P."/>
            <person name="Nandi T."/>
            <person name="Crabtree J."/>
            <person name="Badger J."/>
            <person name="Beckstrom-Sternberg S."/>
            <person name="Saqib M."/>
            <person name="Schutzer S.E."/>
            <person name="Keim P."/>
            <person name="Nierman W.C."/>
        </authorList>
    </citation>
    <scope>NUCLEOTIDE SEQUENCE [LARGE SCALE GENOMIC DNA]</scope>
    <source>
        <strain>NCTC 10247</strain>
    </source>
</reference>